<reference key="1">
    <citation type="journal article" date="2006" name="Nat. Biotechnol.">
        <title>Complete genome of the mutualistic, N2-fixing grass endophyte Azoarcus sp. strain BH72.</title>
        <authorList>
            <person name="Krause A."/>
            <person name="Ramakumar A."/>
            <person name="Bartels D."/>
            <person name="Battistoni F."/>
            <person name="Bekel T."/>
            <person name="Boch J."/>
            <person name="Boehm M."/>
            <person name="Friedrich F."/>
            <person name="Hurek T."/>
            <person name="Krause L."/>
            <person name="Linke B."/>
            <person name="McHardy A.C."/>
            <person name="Sarkar A."/>
            <person name="Schneiker S."/>
            <person name="Syed A.A."/>
            <person name="Thauer R."/>
            <person name="Vorhoelter F.-J."/>
            <person name="Weidner S."/>
            <person name="Puehler A."/>
            <person name="Reinhold-Hurek B."/>
            <person name="Kaiser O."/>
            <person name="Goesmann A."/>
        </authorList>
    </citation>
    <scope>NUCLEOTIDE SEQUENCE [LARGE SCALE GENOMIC DNA]</scope>
    <source>
        <strain>BH72</strain>
    </source>
</reference>
<sequence>MRHADVTRDTLETRISVRIDLDGTGKSVLATGVPFFDHMLDQIARHGAIDLEVRAEGDTHIDDHHTVEDVGITLGQAFAKALGDKKGILRYGHAYVPLDEALSRVVVDFSGRPGLHYFVDYTRARIGNFDVDLAREFFQGFVNHAGVTLHVDNLRGDNAHHQCETIFKAFGRALRMAATRDERLAGAIPSTKGAL</sequence>
<dbReference type="EC" id="4.2.1.19" evidence="1"/>
<dbReference type="EMBL" id="AM406670">
    <property type="protein sequence ID" value="CAL95963.1"/>
    <property type="status" value="ALT_INIT"/>
    <property type="molecule type" value="Genomic_DNA"/>
</dbReference>
<dbReference type="RefSeq" id="WP_041642796.1">
    <property type="nucleotide sequence ID" value="NC_008702.1"/>
</dbReference>
<dbReference type="SMR" id="A1KAV7"/>
<dbReference type="STRING" id="62928.azo3347"/>
<dbReference type="KEGG" id="aoa:dqs_3484"/>
<dbReference type="KEGG" id="azo:azo3347"/>
<dbReference type="eggNOG" id="COG0131">
    <property type="taxonomic scope" value="Bacteria"/>
</dbReference>
<dbReference type="HOGENOM" id="CLU_044308_3_0_4"/>
<dbReference type="OrthoDB" id="9790411at2"/>
<dbReference type="UniPathway" id="UPA00031">
    <property type="reaction ID" value="UER00011"/>
</dbReference>
<dbReference type="Proteomes" id="UP000002588">
    <property type="component" value="Chromosome"/>
</dbReference>
<dbReference type="GO" id="GO:0005737">
    <property type="term" value="C:cytoplasm"/>
    <property type="evidence" value="ECO:0007669"/>
    <property type="project" value="UniProtKB-SubCell"/>
</dbReference>
<dbReference type="GO" id="GO:0004424">
    <property type="term" value="F:imidazoleglycerol-phosphate dehydratase activity"/>
    <property type="evidence" value="ECO:0007669"/>
    <property type="project" value="UniProtKB-UniRule"/>
</dbReference>
<dbReference type="GO" id="GO:0000105">
    <property type="term" value="P:L-histidine biosynthetic process"/>
    <property type="evidence" value="ECO:0007669"/>
    <property type="project" value="UniProtKB-UniRule"/>
</dbReference>
<dbReference type="CDD" id="cd07914">
    <property type="entry name" value="IGPD"/>
    <property type="match status" value="1"/>
</dbReference>
<dbReference type="FunFam" id="3.30.230.40:FF:000001">
    <property type="entry name" value="Imidazoleglycerol-phosphate dehydratase HisB"/>
    <property type="match status" value="1"/>
</dbReference>
<dbReference type="FunFam" id="3.30.230.40:FF:000003">
    <property type="entry name" value="Imidazoleglycerol-phosphate dehydratase HisB"/>
    <property type="match status" value="1"/>
</dbReference>
<dbReference type="Gene3D" id="3.30.230.40">
    <property type="entry name" value="Imidazole glycerol phosphate dehydratase, domain 1"/>
    <property type="match status" value="2"/>
</dbReference>
<dbReference type="HAMAP" id="MF_00076">
    <property type="entry name" value="HisB"/>
    <property type="match status" value="1"/>
</dbReference>
<dbReference type="InterPro" id="IPR038494">
    <property type="entry name" value="IGPD_sf"/>
</dbReference>
<dbReference type="InterPro" id="IPR000807">
    <property type="entry name" value="ImidazoleglycerolP_deHydtase"/>
</dbReference>
<dbReference type="InterPro" id="IPR020565">
    <property type="entry name" value="ImidazoleglycerP_deHydtase_CS"/>
</dbReference>
<dbReference type="InterPro" id="IPR020568">
    <property type="entry name" value="Ribosomal_Su5_D2-typ_SF"/>
</dbReference>
<dbReference type="NCBIfam" id="NF002106">
    <property type="entry name" value="PRK00951.1-1"/>
    <property type="match status" value="1"/>
</dbReference>
<dbReference type="NCBIfam" id="NF002109">
    <property type="entry name" value="PRK00951.1-5"/>
    <property type="match status" value="1"/>
</dbReference>
<dbReference type="NCBIfam" id="NF002111">
    <property type="entry name" value="PRK00951.2-1"/>
    <property type="match status" value="1"/>
</dbReference>
<dbReference type="NCBIfam" id="NF002114">
    <property type="entry name" value="PRK00951.2-4"/>
    <property type="match status" value="1"/>
</dbReference>
<dbReference type="PANTHER" id="PTHR23133:SF2">
    <property type="entry name" value="IMIDAZOLEGLYCEROL-PHOSPHATE DEHYDRATASE"/>
    <property type="match status" value="1"/>
</dbReference>
<dbReference type="PANTHER" id="PTHR23133">
    <property type="entry name" value="IMIDAZOLEGLYCEROL-PHOSPHATE DEHYDRATASE HIS7"/>
    <property type="match status" value="1"/>
</dbReference>
<dbReference type="Pfam" id="PF00475">
    <property type="entry name" value="IGPD"/>
    <property type="match status" value="1"/>
</dbReference>
<dbReference type="SUPFAM" id="SSF54211">
    <property type="entry name" value="Ribosomal protein S5 domain 2-like"/>
    <property type="match status" value="2"/>
</dbReference>
<dbReference type="PROSITE" id="PS00954">
    <property type="entry name" value="IGP_DEHYDRATASE_1"/>
    <property type="match status" value="1"/>
</dbReference>
<dbReference type="PROSITE" id="PS00955">
    <property type="entry name" value="IGP_DEHYDRATASE_2"/>
    <property type="match status" value="1"/>
</dbReference>
<proteinExistence type="inferred from homology"/>
<accession>A1KAV7</accession>
<protein>
    <recommendedName>
        <fullName evidence="1">Imidazoleglycerol-phosphate dehydratase</fullName>
        <shortName evidence="1">IGPD</shortName>
        <ecNumber evidence="1">4.2.1.19</ecNumber>
    </recommendedName>
</protein>
<keyword id="KW-0028">Amino-acid biosynthesis</keyword>
<keyword id="KW-0963">Cytoplasm</keyword>
<keyword id="KW-0368">Histidine biosynthesis</keyword>
<keyword id="KW-0456">Lyase</keyword>
<keyword id="KW-1185">Reference proteome</keyword>
<comment type="catalytic activity">
    <reaction evidence="1">
        <text>D-erythro-1-(imidazol-4-yl)glycerol 3-phosphate = 3-(imidazol-4-yl)-2-oxopropyl phosphate + H2O</text>
        <dbReference type="Rhea" id="RHEA:11040"/>
        <dbReference type="ChEBI" id="CHEBI:15377"/>
        <dbReference type="ChEBI" id="CHEBI:57766"/>
        <dbReference type="ChEBI" id="CHEBI:58278"/>
        <dbReference type="EC" id="4.2.1.19"/>
    </reaction>
</comment>
<comment type="pathway">
    <text evidence="1">Amino-acid biosynthesis; L-histidine biosynthesis; L-histidine from 5-phospho-alpha-D-ribose 1-diphosphate: step 6/9.</text>
</comment>
<comment type="subcellular location">
    <subcellularLocation>
        <location evidence="1">Cytoplasm</location>
    </subcellularLocation>
</comment>
<comment type="similarity">
    <text evidence="1">Belongs to the imidazoleglycerol-phosphate dehydratase family.</text>
</comment>
<comment type="sequence caution" evidence="2">
    <conflict type="erroneous initiation">
        <sequence resource="EMBL-CDS" id="CAL95963"/>
    </conflict>
</comment>
<organism>
    <name type="scientific">Azoarcus sp. (strain BH72)</name>
    <dbReference type="NCBI Taxonomy" id="418699"/>
    <lineage>
        <taxon>Bacteria</taxon>
        <taxon>Pseudomonadati</taxon>
        <taxon>Pseudomonadota</taxon>
        <taxon>Betaproteobacteria</taxon>
        <taxon>Rhodocyclales</taxon>
        <taxon>Zoogloeaceae</taxon>
        <taxon>Azoarcus</taxon>
    </lineage>
</organism>
<name>HIS7_AZOSB</name>
<evidence type="ECO:0000255" key="1">
    <source>
        <dbReference type="HAMAP-Rule" id="MF_00076"/>
    </source>
</evidence>
<evidence type="ECO:0000305" key="2"/>
<feature type="chain" id="PRO_0000336295" description="Imidazoleglycerol-phosphate dehydratase">
    <location>
        <begin position="1"/>
        <end position="195"/>
    </location>
</feature>
<gene>
    <name evidence="1" type="primary">hisB</name>
    <name type="ordered locus">azo3347</name>
</gene>